<feature type="signal peptide" evidence="2">
    <location>
        <begin position="1"/>
        <end position="28"/>
    </location>
</feature>
<feature type="chain" id="PRO_0000367402" description="GDSL esterase/lipase At4g01130">
    <location>
        <begin position="29"/>
        <end position="382"/>
    </location>
</feature>
<feature type="active site" description="Nucleophile" evidence="1">
    <location>
        <position position="41"/>
    </location>
</feature>
<feature type="active site" evidence="1">
    <location>
        <position position="348"/>
    </location>
</feature>
<feature type="active site" evidence="1">
    <location>
        <position position="351"/>
    </location>
</feature>
<feature type="glycosylation site" description="N-linked (GlcNAc...) asparagine" evidence="2">
    <location>
        <position position="118"/>
    </location>
</feature>
<feature type="glycosylation site" description="N-linked (GlcNAc...) asparagine" evidence="2">
    <location>
        <position position="263"/>
    </location>
</feature>
<feature type="glycosylation site" description="N-linked (GlcNAc...) asparagine" evidence="2">
    <location>
        <position position="275"/>
    </location>
</feature>
<feature type="glycosylation site" description="N-linked (GlcNAc...) asparagine" evidence="2">
    <location>
        <position position="330"/>
    </location>
</feature>
<name>GDL61_ARATH</name>
<gene>
    <name type="ordered locus">At4g01130</name>
    <name type="ORF">F2N1.17</name>
    <name type="ORF">IG002N01.17</name>
</gene>
<protein>
    <recommendedName>
        <fullName>GDSL esterase/lipase At4g01130</fullName>
        <ecNumber>3.1.1.-</ecNumber>
    </recommendedName>
    <alternativeName>
        <fullName>Extracellular lipase At4g01130</fullName>
    </alternativeName>
</protein>
<evidence type="ECO:0000250" key="1"/>
<evidence type="ECO:0000255" key="2"/>
<evidence type="ECO:0000305" key="3"/>
<keyword id="KW-0325">Glycoprotein</keyword>
<keyword id="KW-0378">Hydrolase</keyword>
<keyword id="KW-0442">Lipid degradation</keyword>
<keyword id="KW-0443">Lipid metabolism</keyword>
<keyword id="KW-1185">Reference proteome</keyword>
<keyword id="KW-0964">Secreted</keyword>
<keyword id="KW-0732">Signal</keyword>
<accession>Q9M153</accession>
<accession>O04617</accession>
<accession>Q0WNC7</accession>
<reference key="1">
    <citation type="journal article" date="1999" name="Nature">
        <title>Sequence and analysis of chromosome 4 of the plant Arabidopsis thaliana.</title>
        <authorList>
            <person name="Mayer K.F.X."/>
            <person name="Schueller C."/>
            <person name="Wambutt R."/>
            <person name="Murphy G."/>
            <person name="Volckaert G."/>
            <person name="Pohl T."/>
            <person name="Duesterhoeft A."/>
            <person name="Stiekema W."/>
            <person name="Entian K.-D."/>
            <person name="Terryn N."/>
            <person name="Harris B."/>
            <person name="Ansorge W."/>
            <person name="Brandt P."/>
            <person name="Grivell L.A."/>
            <person name="Rieger M."/>
            <person name="Weichselgartner M."/>
            <person name="de Simone V."/>
            <person name="Obermaier B."/>
            <person name="Mache R."/>
            <person name="Mueller M."/>
            <person name="Kreis M."/>
            <person name="Delseny M."/>
            <person name="Puigdomenech P."/>
            <person name="Watson M."/>
            <person name="Schmidtheini T."/>
            <person name="Reichert B."/>
            <person name="Portetelle D."/>
            <person name="Perez-Alonso M."/>
            <person name="Boutry M."/>
            <person name="Bancroft I."/>
            <person name="Vos P."/>
            <person name="Hoheisel J."/>
            <person name="Zimmermann W."/>
            <person name="Wedler H."/>
            <person name="Ridley P."/>
            <person name="Langham S.-A."/>
            <person name="McCullagh B."/>
            <person name="Bilham L."/>
            <person name="Robben J."/>
            <person name="van der Schueren J."/>
            <person name="Grymonprez B."/>
            <person name="Chuang Y.-J."/>
            <person name="Vandenbussche F."/>
            <person name="Braeken M."/>
            <person name="Weltjens I."/>
            <person name="Voet M."/>
            <person name="Bastiaens I."/>
            <person name="Aert R."/>
            <person name="Defoor E."/>
            <person name="Weitzenegger T."/>
            <person name="Bothe G."/>
            <person name="Ramsperger U."/>
            <person name="Hilbert H."/>
            <person name="Braun M."/>
            <person name="Holzer E."/>
            <person name="Brandt A."/>
            <person name="Peters S."/>
            <person name="van Staveren M."/>
            <person name="Dirkse W."/>
            <person name="Mooijman P."/>
            <person name="Klein Lankhorst R."/>
            <person name="Rose M."/>
            <person name="Hauf J."/>
            <person name="Koetter P."/>
            <person name="Berneiser S."/>
            <person name="Hempel S."/>
            <person name="Feldpausch M."/>
            <person name="Lamberth S."/>
            <person name="Van den Daele H."/>
            <person name="De Keyser A."/>
            <person name="Buysshaert C."/>
            <person name="Gielen J."/>
            <person name="Villarroel R."/>
            <person name="De Clercq R."/>
            <person name="van Montagu M."/>
            <person name="Rogers J."/>
            <person name="Cronin A."/>
            <person name="Quail M.A."/>
            <person name="Bray-Allen S."/>
            <person name="Clark L."/>
            <person name="Doggett J."/>
            <person name="Hall S."/>
            <person name="Kay M."/>
            <person name="Lennard N."/>
            <person name="McLay K."/>
            <person name="Mayes R."/>
            <person name="Pettett A."/>
            <person name="Rajandream M.A."/>
            <person name="Lyne M."/>
            <person name="Benes V."/>
            <person name="Rechmann S."/>
            <person name="Borkova D."/>
            <person name="Bloecker H."/>
            <person name="Scharfe M."/>
            <person name="Grimm M."/>
            <person name="Loehnert T.-H."/>
            <person name="Dose S."/>
            <person name="de Haan M."/>
            <person name="Maarse A.C."/>
            <person name="Schaefer M."/>
            <person name="Mueller-Auer S."/>
            <person name="Gabel C."/>
            <person name="Fuchs M."/>
            <person name="Fartmann B."/>
            <person name="Granderath K."/>
            <person name="Dauner D."/>
            <person name="Herzl A."/>
            <person name="Neumann S."/>
            <person name="Argiriou A."/>
            <person name="Vitale D."/>
            <person name="Liguori R."/>
            <person name="Piravandi E."/>
            <person name="Massenet O."/>
            <person name="Quigley F."/>
            <person name="Clabauld G."/>
            <person name="Muendlein A."/>
            <person name="Felber R."/>
            <person name="Schnabl S."/>
            <person name="Hiller R."/>
            <person name="Schmidt W."/>
            <person name="Lecharny A."/>
            <person name="Aubourg S."/>
            <person name="Chefdor F."/>
            <person name="Cooke R."/>
            <person name="Berger C."/>
            <person name="Monfort A."/>
            <person name="Casacuberta E."/>
            <person name="Gibbons T."/>
            <person name="Weber N."/>
            <person name="Vandenbol M."/>
            <person name="Bargues M."/>
            <person name="Terol J."/>
            <person name="Torres A."/>
            <person name="Perez-Perez A."/>
            <person name="Purnelle B."/>
            <person name="Bent E."/>
            <person name="Johnson S."/>
            <person name="Tacon D."/>
            <person name="Jesse T."/>
            <person name="Heijnen L."/>
            <person name="Schwarz S."/>
            <person name="Scholler P."/>
            <person name="Heber S."/>
            <person name="Francs P."/>
            <person name="Bielke C."/>
            <person name="Frishman D."/>
            <person name="Haase D."/>
            <person name="Lemcke K."/>
            <person name="Mewes H.-W."/>
            <person name="Stocker S."/>
            <person name="Zaccaria P."/>
            <person name="Bevan M."/>
            <person name="Wilson R.K."/>
            <person name="de la Bastide M."/>
            <person name="Habermann K."/>
            <person name="Parnell L."/>
            <person name="Dedhia N."/>
            <person name="Gnoj L."/>
            <person name="Schutz K."/>
            <person name="Huang E."/>
            <person name="Spiegel L."/>
            <person name="Sekhon M."/>
            <person name="Murray J."/>
            <person name="Sheet P."/>
            <person name="Cordes M."/>
            <person name="Abu-Threideh J."/>
            <person name="Stoneking T."/>
            <person name="Kalicki J."/>
            <person name="Graves T."/>
            <person name="Harmon G."/>
            <person name="Edwards J."/>
            <person name="Latreille P."/>
            <person name="Courtney L."/>
            <person name="Cloud J."/>
            <person name="Abbott A."/>
            <person name="Scott K."/>
            <person name="Johnson D."/>
            <person name="Minx P."/>
            <person name="Bentley D."/>
            <person name="Fulton B."/>
            <person name="Miller N."/>
            <person name="Greco T."/>
            <person name="Kemp K."/>
            <person name="Kramer J."/>
            <person name="Fulton L."/>
            <person name="Mardis E."/>
            <person name="Dante M."/>
            <person name="Pepin K."/>
            <person name="Hillier L.W."/>
            <person name="Nelson J."/>
            <person name="Spieth J."/>
            <person name="Ryan E."/>
            <person name="Andrews S."/>
            <person name="Geisel C."/>
            <person name="Layman D."/>
            <person name="Du H."/>
            <person name="Ali J."/>
            <person name="Berghoff A."/>
            <person name="Jones K."/>
            <person name="Drone K."/>
            <person name="Cotton M."/>
            <person name="Joshu C."/>
            <person name="Antonoiu B."/>
            <person name="Zidanic M."/>
            <person name="Strong C."/>
            <person name="Sun H."/>
            <person name="Lamar B."/>
            <person name="Yordan C."/>
            <person name="Ma P."/>
            <person name="Zhong J."/>
            <person name="Preston R."/>
            <person name="Vil D."/>
            <person name="Shekher M."/>
            <person name="Matero A."/>
            <person name="Shah R."/>
            <person name="Swaby I.K."/>
            <person name="O'Shaughnessy A."/>
            <person name="Rodriguez M."/>
            <person name="Hoffman J."/>
            <person name="Till S."/>
            <person name="Granat S."/>
            <person name="Shohdy N."/>
            <person name="Hasegawa A."/>
            <person name="Hameed A."/>
            <person name="Lodhi M."/>
            <person name="Johnson A."/>
            <person name="Chen E."/>
            <person name="Marra M.A."/>
            <person name="Martienssen R."/>
            <person name="McCombie W.R."/>
        </authorList>
    </citation>
    <scope>NUCLEOTIDE SEQUENCE [LARGE SCALE GENOMIC DNA]</scope>
    <source>
        <strain>cv. Columbia</strain>
    </source>
</reference>
<reference key="2">
    <citation type="journal article" date="2017" name="Plant J.">
        <title>Araport11: a complete reannotation of the Arabidopsis thaliana reference genome.</title>
        <authorList>
            <person name="Cheng C.Y."/>
            <person name="Krishnakumar V."/>
            <person name="Chan A.P."/>
            <person name="Thibaud-Nissen F."/>
            <person name="Schobel S."/>
            <person name="Town C.D."/>
        </authorList>
    </citation>
    <scope>GENOME REANNOTATION</scope>
    <source>
        <strain>cv. Columbia</strain>
    </source>
</reference>
<reference key="3">
    <citation type="submission" date="2006-12" db="EMBL/GenBank/DDBJ databases">
        <title>Arabidopsis ORF clones.</title>
        <authorList>
            <person name="Bautista V.R."/>
            <person name="Kim C.J."/>
            <person name="Chen H."/>
            <person name="Quinitio C."/>
            <person name="Ecker J.R."/>
        </authorList>
    </citation>
    <scope>NUCLEOTIDE SEQUENCE [LARGE SCALE MRNA]</scope>
    <source>
        <strain>cv. Columbia</strain>
    </source>
</reference>
<reference key="4">
    <citation type="submission" date="2006-07" db="EMBL/GenBank/DDBJ databases">
        <title>Large-scale analysis of RIKEN Arabidopsis full-length (RAFL) cDNAs.</title>
        <authorList>
            <person name="Totoki Y."/>
            <person name="Seki M."/>
            <person name="Ishida J."/>
            <person name="Nakajima M."/>
            <person name="Enju A."/>
            <person name="Kamiya A."/>
            <person name="Narusaka M."/>
            <person name="Shin-i T."/>
            <person name="Nakagawa M."/>
            <person name="Sakamoto N."/>
            <person name="Oishi K."/>
            <person name="Kohara Y."/>
            <person name="Kobayashi M."/>
            <person name="Toyoda A."/>
            <person name="Sakaki Y."/>
            <person name="Sakurai T."/>
            <person name="Iida K."/>
            <person name="Akiyama K."/>
            <person name="Satou M."/>
            <person name="Toyoda T."/>
            <person name="Konagaya A."/>
            <person name="Carninci P."/>
            <person name="Kawai J."/>
            <person name="Hayashizaki Y."/>
            <person name="Shinozaki K."/>
        </authorList>
    </citation>
    <scope>NUCLEOTIDE SEQUENCE [LARGE SCALE MRNA] OF 20-267</scope>
    <source>
        <strain>cv. Columbia</strain>
    </source>
</reference>
<reference key="5">
    <citation type="journal article" date="2004" name="Prog. Lipid Res.">
        <title>GDSL family of serine esterases/lipases.</title>
        <authorList>
            <person name="Akoh C.C."/>
            <person name="Lee G.-C."/>
            <person name="Liaw Y.-C."/>
            <person name="Huang T.-H."/>
            <person name="Shaw J.-F."/>
        </authorList>
    </citation>
    <scope>REVIEW</scope>
</reference>
<reference key="6">
    <citation type="journal article" date="2008" name="Pak. J. Biol. Sci.">
        <title>Sequence analysis of GDSL lipase gene family in Arabidopsis thaliana.</title>
        <authorList>
            <person name="Ling H."/>
        </authorList>
    </citation>
    <scope>GENE FAMILY</scope>
</reference>
<proteinExistence type="evidence at transcript level"/>
<comment type="subcellular location">
    <subcellularLocation>
        <location evidence="3">Secreted</location>
    </subcellularLocation>
</comment>
<comment type="similarity">
    <text evidence="3">Belongs to the 'GDSL' lipolytic enzyme family.</text>
</comment>
<comment type="sequence caution" evidence="3">
    <conflict type="erroneous gene model prediction">
        <sequence resource="EMBL-CDS" id="AAB61024"/>
    </conflict>
</comment>
<dbReference type="EC" id="3.1.1.-"/>
<dbReference type="EMBL" id="AF007269">
    <property type="protein sequence ID" value="AAB61024.1"/>
    <property type="status" value="ALT_SEQ"/>
    <property type="molecule type" value="Genomic_DNA"/>
</dbReference>
<dbReference type="EMBL" id="AL161491">
    <property type="protein sequence ID" value="CAB80922.1"/>
    <property type="molecule type" value="Genomic_DNA"/>
</dbReference>
<dbReference type="EMBL" id="CP002687">
    <property type="protein sequence ID" value="AEE81985.1"/>
    <property type="molecule type" value="Genomic_DNA"/>
</dbReference>
<dbReference type="EMBL" id="BT029544">
    <property type="protein sequence ID" value="ABL66800.1"/>
    <property type="molecule type" value="mRNA"/>
</dbReference>
<dbReference type="EMBL" id="AK229518">
    <property type="protein sequence ID" value="BAF01373.1"/>
    <property type="molecule type" value="mRNA"/>
</dbReference>
<dbReference type="PIR" id="H85014">
    <property type="entry name" value="H85014"/>
</dbReference>
<dbReference type="PIR" id="T01727">
    <property type="entry name" value="T01727"/>
</dbReference>
<dbReference type="RefSeq" id="NP_192022.1">
    <property type="nucleotide sequence ID" value="NM_116343.4"/>
</dbReference>
<dbReference type="SMR" id="Q9M153"/>
<dbReference type="BioGRID" id="13496">
    <property type="interactions" value="1"/>
</dbReference>
<dbReference type="FunCoup" id="Q9M153">
    <property type="interactions" value="128"/>
</dbReference>
<dbReference type="STRING" id="3702.Q9M153"/>
<dbReference type="GlyGen" id="Q9M153">
    <property type="glycosylation" value="4 sites"/>
</dbReference>
<dbReference type="iPTMnet" id="Q9M153"/>
<dbReference type="PaxDb" id="3702-AT4G01130.1"/>
<dbReference type="ProteomicsDB" id="224764"/>
<dbReference type="EnsemblPlants" id="AT4G01130.1">
    <property type="protein sequence ID" value="AT4G01130.1"/>
    <property type="gene ID" value="AT4G01130"/>
</dbReference>
<dbReference type="GeneID" id="828207"/>
<dbReference type="Gramene" id="AT4G01130.1">
    <property type="protein sequence ID" value="AT4G01130.1"/>
    <property type="gene ID" value="AT4G01130"/>
</dbReference>
<dbReference type="KEGG" id="ath:AT4G01130"/>
<dbReference type="Araport" id="AT4G01130"/>
<dbReference type="TAIR" id="AT4G01130"/>
<dbReference type="eggNOG" id="ENOG502QPIT">
    <property type="taxonomic scope" value="Eukaryota"/>
</dbReference>
<dbReference type="HOGENOM" id="CLU_015101_2_0_1"/>
<dbReference type="InParanoid" id="Q9M153"/>
<dbReference type="OMA" id="CMKTYNS"/>
<dbReference type="PhylomeDB" id="Q9M153"/>
<dbReference type="BioCyc" id="ARA:AT4G01130-MONOMER"/>
<dbReference type="PRO" id="PR:Q9M153"/>
<dbReference type="Proteomes" id="UP000006548">
    <property type="component" value="Chromosome 4"/>
</dbReference>
<dbReference type="ExpressionAtlas" id="Q9M153">
    <property type="expression patterns" value="baseline and differential"/>
</dbReference>
<dbReference type="GO" id="GO:0005829">
    <property type="term" value="C:cytosol"/>
    <property type="evidence" value="ECO:0007005"/>
    <property type="project" value="TAIR"/>
</dbReference>
<dbReference type="GO" id="GO:0005576">
    <property type="term" value="C:extracellular region"/>
    <property type="evidence" value="ECO:0007669"/>
    <property type="project" value="UniProtKB-SubCell"/>
</dbReference>
<dbReference type="GO" id="GO:0016788">
    <property type="term" value="F:hydrolase activity, acting on ester bonds"/>
    <property type="evidence" value="ECO:0007669"/>
    <property type="project" value="InterPro"/>
</dbReference>
<dbReference type="GO" id="GO:0016042">
    <property type="term" value="P:lipid catabolic process"/>
    <property type="evidence" value="ECO:0007669"/>
    <property type="project" value="UniProtKB-KW"/>
</dbReference>
<dbReference type="CDD" id="cd01837">
    <property type="entry name" value="SGNH_plant_lipase_like"/>
    <property type="match status" value="1"/>
</dbReference>
<dbReference type="Gene3D" id="3.40.50.1110">
    <property type="entry name" value="SGNH hydrolase"/>
    <property type="match status" value="1"/>
</dbReference>
<dbReference type="InterPro" id="IPR001087">
    <property type="entry name" value="GDSL"/>
</dbReference>
<dbReference type="InterPro" id="IPR036514">
    <property type="entry name" value="SGNH_hydro_sf"/>
</dbReference>
<dbReference type="InterPro" id="IPR035669">
    <property type="entry name" value="SGNH_plant_lipase-like"/>
</dbReference>
<dbReference type="PANTHER" id="PTHR22835:SF476">
    <property type="entry name" value="OS06G0160200 PROTEIN"/>
    <property type="match status" value="1"/>
</dbReference>
<dbReference type="PANTHER" id="PTHR22835">
    <property type="entry name" value="ZINC FINGER FYVE DOMAIN CONTAINING PROTEIN"/>
    <property type="match status" value="1"/>
</dbReference>
<dbReference type="Pfam" id="PF00657">
    <property type="entry name" value="Lipase_GDSL"/>
    <property type="match status" value="1"/>
</dbReference>
<sequence length="382" mass="42013">MASDINRRRSFSLLVLIIVMLYGHKGDSKCDFEAIFNFGDSNSDTGGFWAAFPAQSGPWGMTYFKKPAGRASDGRLIIDFLAKSLGMPFLSPYLQSIGSDFRHGANFATLASTVLLPNTSLFVSGISPFSLAIQLNQMKQFKVNVDESHSLDRPGLKILPSKIVFGKSLYTFYIGQNDFTSNLASIGVERVKLYLPQVIGQIAGTIKEIYGIGGRTFLVLNLAPVGCYPAILTGYTHTDADLDKYGCLIPVNKAVKYYNTLLNKTLSQTRTELKNATVIYLDTHKILLDLFQHPKSYGMKHGIKACCGYGGRPYNFNQKLFCGNTKVIGNFSTTAKACHDPHNYVSWDGIHATEAANHHISMAILDGSISYPPFILNNLCSP</sequence>
<organism>
    <name type="scientific">Arabidopsis thaliana</name>
    <name type="common">Mouse-ear cress</name>
    <dbReference type="NCBI Taxonomy" id="3702"/>
    <lineage>
        <taxon>Eukaryota</taxon>
        <taxon>Viridiplantae</taxon>
        <taxon>Streptophyta</taxon>
        <taxon>Embryophyta</taxon>
        <taxon>Tracheophyta</taxon>
        <taxon>Spermatophyta</taxon>
        <taxon>Magnoliopsida</taxon>
        <taxon>eudicotyledons</taxon>
        <taxon>Gunneridae</taxon>
        <taxon>Pentapetalae</taxon>
        <taxon>rosids</taxon>
        <taxon>malvids</taxon>
        <taxon>Brassicales</taxon>
        <taxon>Brassicaceae</taxon>
        <taxon>Camelineae</taxon>
        <taxon>Arabidopsis</taxon>
    </lineage>
</organism>